<gene>
    <name type="primary">NOP9</name>
    <name type="ORF">GLRG_11388</name>
</gene>
<evidence type="ECO:0000250" key="1"/>
<evidence type="ECO:0000256" key="2">
    <source>
        <dbReference type="SAM" id="MobiDB-lite"/>
    </source>
</evidence>
<evidence type="ECO:0000305" key="3"/>
<feature type="chain" id="PRO_0000407810" description="Nucleolar protein 9">
    <location>
        <begin position="1"/>
        <end position="712"/>
    </location>
</feature>
<feature type="repeat" description="Pumilio 1">
    <location>
        <begin position="116"/>
        <end position="151"/>
    </location>
</feature>
<feature type="repeat" description="Pumilio 2">
    <location>
        <begin position="221"/>
        <end position="261"/>
    </location>
</feature>
<feature type="repeat" description="Pumilio 3">
    <location>
        <begin position="368"/>
        <end position="403"/>
    </location>
</feature>
<feature type="repeat" description="Pumilio 4">
    <location>
        <begin position="590"/>
        <end position="633"/>
    </location>
</feature>
<feature type="region of interest" description="Disordered" evidence="2">
    <location>
        <begin position="1"/>
        <end position="75"/>
    </location>
</feature>
<feature type="region of interest" description="Disordered" evidence="2">
    <location>
        <begin position="673"/>
        <end position="712"/>
    </location>
</feature>
<feature type="compositionally biased region" description="Basic residues" evidence="2">
    <location>
        <begin position="1"/>
        <end position="20"/>
    </location>
</feature>
<feature type="compositionally biased region" description="Basic and acidic residues" evidence="2">
    <location>
        <begin position="21"/>
        <end position="35"/>
    </location>
</feature>
<feature type="compositionally biased region" description="Basic and acidic residues" evidence="2">
    <location>
        <begin position="673"/>
        <end position="693"/>
    </location>
</feature>
<feature type="compositionally biased region" description="Basic and acidic residues" evidence="2">
    <location>
        <begin position="702"/>
        <end position="712"/>
    </location>
</feature>
<comment type="function">
    <text evidence="1">RNA-binding nucleolar protein required for pre-rRNA processing. Involved in production of 18S rRNA and assembly of small ribosomal subunit (By similarity).</text>
</comment>
<comment type="subcellular location">
    <subcellularLocation>
        <location evidence="1">Nucleus</location>
        <location evidence="1">Nucleolus</location>
    </subcellularLocation>
</comment>
<comment type="similarity">
    <text evidence="3">Belongs to the NOP9 family.</text>
</comment>
<proteinExistence type="inferred from homology"/>
<name>NOP9_COLGM</name>
<sequence length="712" mass="80272">MPKPRTKRQAIRDERKKKRRETHEETHEENHDERQSKRRRVDGEDRDEDEDTQQQTYNDAGDHPQPFHGNGPEKEFFGMLADEEQEYFRRADELLELNQFPSPEERHVFLQNVYKEARGKELKLASSQSLSRLMERLILLSNTRQKKQIFNAFAGHFLSLVQHRFASHCCEKLFLESAPIVTQELGGIVPETEGNYDEMEVEEDAEPDNTMENLFLMTLDEFEEHMGFLLTDRFGSHTLRVLLVILSGRPLDDSSTKLLLKSKKKEYISVQGATGASDELTHQLRAVPESFTQATKKIIQDAVAGMDFTALRVLAKHPTGNPLLQLLLELDISLNHKSDKSSAAASKDTLLYRLLPDAPASLADETSQAADFVNSMVYDQIGSRLLETLITNCPGKVFKALSHNFFGDRIATYVRNDIASYPALRVLNRFSKDDLVEAVKKIIPVVPLLVSKARYNVLKTLFERCDARGAYEEKSALTRALTDALGPNPKDLVPKLCHLVEDESADKDQFQQSPQNKTAVAAHGCHLVSTMLKTPGNASKVAQKSLVALPPDLLVKLATTAMASTTVLTTALASPAAPQNEFFHKALVGALAPHAAELAQSQFGHNVINAIVEIPSRGTDRCVPFHVKQTIIASLAGHERALRDSWMGRSVWRTWKGDMWKTRRSDWVKWAKEVDGPAEETKLKPWERRKLEQQKGPQPRQPPRETAKEDKE</sequence>
<protein>
    <recommendedName>
        <fullName>Nucleolar protein 9</fullName>
    </recommendedName>
    <alternativeName>
        <fullName>Pumilio domain-containing protein NOP9</fullName>
    </alternativeName>
</protein>
<accession>E3QZF5</accession>
<dbReference type="EMBL" id="GG697415">
    <property type="protein sequence ID" value="EFQ36243.1"/>
    <property type="molecule type" value="Genomic_DNA"/>
</dbReference>
<dbReference type="RefSeq" id="XP_008100263.1">
    <property type="nucleotide sequence ID" value="XM_008102072.1"/>
</dbReference>
<dbReference type="SMR" id="E3QZF5"/>
<dbReference type="STRING" id="645133.E3QZF5"/>
<dbReference type="EnsemblFungi" id="EFQ36243">
    <property type="protein sequence ID" value="EFQ36243"/>
    <property type="gene ID" value="GLRG_11388"/>
</dbReference>
<dbReference type="GeneID" id="24416752"/>
<dbReference type="VEuPathDB" id="FungiDB:GLRG_11388"/>
<dbReference type="eggNOG" id="KOG2188">
    <property type="taxonomic scope" value="Eukaryota"/>
</dbReference>
<dbReference type="HOGENOM" id="CLU_008720_1_0_1"/>
<dbReference type="OrthoDB" id="392571at2759"/>
<dbReference type="Proteomes" id="UP000008782">
    <property type="component" value="Unassembled WGS sequence"/>
</dbReference>
<dbReference type="GO" id="GO:0030686">
    <property type="term" value="C:90S preribosome"/>
    <property type="evidence" value="ECO:0007669"/>
    <property type="project" value="TreeGrafter"/>
</dbReference>
<dbReference type="GO" id="GO:0005730">
    <property type="term" value="C:nucleolus"/>
    <property type="evidence" value="ECO:0007669"/>
    <property type="project" value="UniProtKB-SubCell"/>
</dbReference>
<dbReference type="GO" id="GO:0030688">
    <property type="term" value="C:preribosome, small subunit precursor"/>
    <property type="evidence" value="ECO:0007669"/>
    <property type="project" value="TreeGrafter"/>
</dbReference>
<dbReference type="GO" id="GO:0003723">
    <property type="term" value="F:RNA binding"/>
    <property type="evidence" value="ECO:0007669"/>
    <property type="project" value="InterPro"/>
</dbReference>
<dbReference type="GO" id="GO:0000480">
    <property type="term" value="P:endonucleolytic cleavage in 5'-ETS of tricistronic rRNA transcript (SSU-rRNA, 5.8S rRNA, LSU-rRNA)"/>
    <property type="evidence" value="ECO:0007669"/>
    <property type="project" value="TreeGrafter"/>
</dbReference>
<dbReference type="GO" id="GO:0000447">
    <property type="term" value="P:endonucleolytic cleavage in ITS1 to separate SSU-rRNA from 5.8S rRNA and LSU-rRNA from tricistronic rRNA transcript (SSU-rRNA, 5.8S rRNA, LSU-rRNA)"/>
    <property type="evidence" value="ECO:0007669"/>
    <property type="project" value="TreeGrafter"/>
</dbReference>
<dbReference type="GO" id="GO:0000472">
    <property type="term" value="P:endonucleolytic cleavage to generate mature 5'-end of SSU-rRNA from (SSU-rRNA, 5.8S rRNA, LSU-rRNA)"/>
    <property type="evidence" value="ECO:0007669"/>
    <property type="project" value="TreeGrafter"/>
</dbReference>
<dbReference type="GO" id="GO:0000056">
    <property type="term" value="P:ribosomal small subunit export from nucleus"/>
    <property type="evidence" value="ECO:0007669"/>
    <property type="project" value="TreeGrafter"/>
</dbReference>
<dbReference type="Gene3D" id="1.25.10.10">
    <property type="entry name" value="Leucine-rich Repeat Variant"/>
    <property type="match status" value="2"/>
</dbReference>
<dbReference type="InterPro" id="IPR011989">
    <property type="entry name" value="ARM-like"/>
</dbReference>
<dbReference type="InterPro" id="IPR016024">
    <property type="entry name" value="ARM-type_fold"/>
</dbReference>
<dbReference type="InterPro" id="IPR040000">
    <property type="entry name" value="NOP9"/>
</dbReference>
<dbReference type="InterPro" id="IPR001313">
    <property type="entry name" value="Pumilio_RNA-bd_rpt"/>
</dbReference>
<dbReference type="PANTHER" id="PTHR13102">
    <property type="entry name" value="NUCLEOLAR PROTEIN 9"/>
    <property type="match status" value="1"/>
</dbReference>
<dbReference type="PANTHER" id="PTHR13102:SF0">
    <property type="entry name" value="NUCLEOLAR PROTEIN 9"/>
    <property type="match status" value="1"/>
</dbReference>
<dbReference type="Pfam" id="PF22493">
    <property type="entry name" value="PUF_NOP9"/>
    <property type="match status" value="1"/>
</dbReference>
<dbReference type="SMART" id="SM00025">
    <property type="entry name" value="Pumilio"/>
    <property type="match status" value="5"/>
</dbReference>
<dbReference type="SUPFAM" id="SSF48371">
    <property type="entry name" value="ARM repeat"/>
    <property type="match status" value="2"/>
</dbReference>
<reference key="1">
    <citation type="journal article" date="2012" name="Nat. Genet.">
        <title>Lifestyle transitions in plant pathogenic Colletotrichum fungi deciphered by genome and transcriptome analyses.</title>
        <authorList>
            <person name="O'Connell R.J."/>
            <person name="Thon M.R."/>
            <person name="Hacquard S."/>
            <person name="Amyotte S.G."/>
            <person name="Kleemann J."/>
            <person name="Torres M.F."/>
            <person name="Damm U."/>
            <person name="Buiate E.A."/>
            <person name="Epstein L."/>
            <person name="Alkan N."/>
            <person name="Altmueller J."/>
            <person name="Alvarado-Balderrama L."/>
            <person name="Bauser C.A."/>
            <person name="Becker C."/>
            <person name="Birren B.W."/>
            <person name="Chen Z."/>
            <person name="Choi J."/>
            <person name="Crouch J.A."/>
            <person name="Duvick J.P."/>
            <person name="Farman M.A."/>
            <person name="Gan P."/>
            <person name="Heiman D."/>
            <person name="Henrissat B."/>
            <person name="Howard R.J."/>
            <person name="Kabbage M."/>
            <person name="Koch C."/>
            <person name="Kracher B."/>
            <person name="Kubo Y."/>
            <person name="Law A.D."/>
            <person name="Lebrun M.-H."/>
            <person name="Lee Y.-H."/>
            <person name="Miyara I."/>
            <person name="Moore N."/>
            <person name="Neumann U."/>
            <person name="Nordstroem K."/>
            <person name="Panaccione D.G."/>
            <person name="Panstruga R."/>
            <person name="Place M."/>
            <person name="Proctor R.H."/>
            <person name="Prusky D."/>
            <person name="Rech G."/>
            <person name="Reinhardt R."/>
            <person name="Rollins J.A."/>
            <person name="Rounsley S."/>
            <person name="Schardl C.L."/>
            <person name="Schwartz D.C."/>
            <person name="Shenoy N."/>
            <person name="Shirasu K."/>
            <person name="Sikhakolli U.R."/>
            <person name="Stueber K."/>
            <person name="Sukno S.A."/>
            <person name="Sweigard J.A."/>
            <person name="Takano Y."/>
            <person name="Takahara H."/>
            <person name="Trail F."/>
            <person name="van der Does H.C."/>
            <person name="Voll L.M."/>
            <person name="Will I."/>
            <person name="Young S."/>
            <person name="Zeng Q."/>
            <person name="Zhang J."/>
            <person name="Zhou S."/>
            <person name="Dickman M.B."/>
            <person name="Schulze-Lefert P."/>
            <person name="Ver Loren van Themaat E."/>
            <person name="Ma L.-J."/>
            <person name="Vaillancourt L.J."/>
        </authorList>
    </citation>
    <scope>NUCLEOTIDE SEQUENCE [LARGE SCALE GENOMIC DNA]</scope>
    <source>
        <strain>M1.001 / M2 / FGSC 10212</strain>
    </source>
</reference>
<keyword id="KW-0539">Nucleus</keyword>
<keyword id="KW-1185">Reference proteome</keyword>
<keyword id="KW-0677">Repeat</keyword>
<keyword id="KW-0690">Ribosome biogenesis</keyword>
<keyword id="KW-0698">rRNA processing</keyword>
<organism>
    <name type="scientific">Colletotrichum graminicola (strain M1.001 / M2 / FGSC 10212)</name>
    <name type="common">Maize anthracnose fungus</name>
    <name type="synonym">Glomerella graminicola</name>
    <dbReference type="NCBI Taxonomy" id="645133"/>
    <lineage>
        <taxon>Eukaryota</taxon>
        <taxon>Fungi</taxon>
        <taxon>Dikarya</taxon>
        <taxon>Ascomycota</taxon>
        <taxon>Pezizomycotina</taxon>
        <taxon>Sordariomycetes</taxon>
        <taxon>Hypocreomycetidae</taxon>
        <taxon>Glomerellales</taxon>
        <taxon>Glomerellaceae</taxon>
        <taxon>Colletotrichum</taxon>
        <taxon>Colletotrichum graminicola species complex</taxon>
    </lineage>
</organism>